<evidence type="ECO:0000250" key="1">
    <source>
        <dbReference type="UniProtKB" id="Q8N184"/>
    </source>
</evidence>
<evidence type="ECO:0000255" key="2">
    <source>
        <dbReference type="PROSITE-ProRule" id="PRU00042"/>
    </source>
</evidence>
<evidence type="ECO:0000255" key="3">
    <source>
        <dbReference type="PROSITE-ProRule" id="PRU00119"/>
    </source>
</evidence>
<evidence type="ECO:0000305" key="4"/>
<organism>
    <name type="scientific">Bos taurus</name>
    <name type="common">Bovine</name>
    <dbReference type="NCBI Taxonomy" id="9913"/>
    <lineage>
        <taxon>Eukaryota</taxon>
        <taxon>Metazoa</taxon>
        <taxon>Chordata</taxon>
        <taxon>Craniata</taxon>
        <taxon>Vertebrata</taxon>
        <taxon>Euteleostomi</taxon>
        <taxon>Mammalia</taxon>
        <taxon>Eutheria</taxon>
        <taxon>Laurasiatheria</taxon>
        <taxon>Artiodactyla</taxon>
        <taxon>Ruminantia</taxon>
        <taxon>Pecora</taxon>
        <taxon>Bovidae</taxon>
        <taxon>Bovinae</taxon>
        <taxon>Bos</taxon>
    </lineage>
</organism>
<name>ZN567_BOVIN</name>
<feature type="chain" id="PRO_0000291554" description="Zinc finger protein 567">
    <location>
        <begin position="1"/>
        <end position="647"/>
    </location>
</feature>
<feature type="domain" description="KRAB" evidence="3">
    <location>
        <begin position="32"/>
        <end position="77"/>
    </location>
</feature>
<feature type="zinc finger region" description="C2H2-type 1; degenerate" evidence="2">
    <location>
        <begin position="210"/>
        <end position="232"/>
    </location>
</feature>
<feature type="zinc finger region" description="C2H2-type 2" evidence="2">
    <location>
        <begin position="253"/>
        <end position="275"/>
    </location>
</feature>
<feature type="zinc finger region" description="C2H2-type 3" evidence="2">
    <location>
        <begin position="281"/>
        <end position="303"/>
    </location>
</feature>
<feature type="zinc finger region" description="C2H2-type 4" evidence="2">
    <location>
        <begin position="309"/>
        <end position="331"/>
    </location>
</feature>
<feature type="zinc finger region" description="C2H2-type 5" evidence="2">
    <location>
        <begin position="337"/>
        <end position="359"/>
    </location>
</feature>
<feature type="zinc finger region" description="C2H2-type 6" evidence="2">
    <location>
        <begin position="365"/>
        <end position="387"/>
    </location>
</feature>
<feature type="zinc finger region" description="C2H2-type 7" evidence="2">
    <location>
        <begin position="393"/>
        <end position="415"/>
    </location>
</feature>
<feature type="zinc finger region" description="C2H2-type 8" evidence="2">
    <location>
        <begin position="421"/>
        <end position="443"/>
    </location>
</feature>
<feature type="zinc finger region" description="C2H2-type 9" evidence="2">
    <location>
        <begin position="449"/>
        <end position="471"/>
    </location>
</feature>
<feature type="zinc finger region" description="C2H2-type 10" evidence="2">
    <location>
        <begin position="477"/>
        <end position="499"/>
    </location>
</feature>
<feature type="zinc finger region" description="C2H2-type 11" evidence="2">
    <location>
        <begin position="505"/>
        <end position="527"/>
    </location>
</feature>
<feature type="zinc finger region" description="C2H2-type 12" evidence="2">
    <location>
        <begin position="533"/>
        <end position="555"/>
    </location>
</feature>
<feature type="zinc finger region" description="C2H2-type 13" evidence="2">
    <location>
        <begin position="561"/>
        <end position="583"/>
    </location>
</feature>
<feature type="zinc finger region" description="C2H2-type 14" evidence="2">
    <location>
        <begin position="589"/>
        <end position="611"/>
    </location>
</feature>
<feature type="zinc finger region" description="C2H2-type 15" evidence="2">
    <location>
        <begin position="617"/>
        <end position="639"/>
    </location>
</feature>
<feature type="cross-link" description="Glycyl lysine isopeptide (Lys-Gly) (interchain with G-Cter in SUMO2)" evidence="1">
    <location>
        <position position="173"/>
    </location>
</feature>
<feature type="cross-link" description="Glycyl lysine isopeptide (Lys-Gly) (interchain with G-Cter in SUMO2)" evidence="1">
    <location>
        <position position="202"/>
    </location>
</feature>
<feature type="cross-link" description="Glycyl lysine isopeptide (Lys-Gly) (interchain with G-Cter in SUMO2)" evidence="1">
    <location>
        <position position="217"/>
    </location>
</feature>
<feature type="cross-link" description="Glycyl lysine isopeptide (Lys-Gly) (interchain with G-Cter in SUMO2)" evidence="1">
    <location>
        <position position="447"/>
    </location>
</feature>
<reference key="1">
    <citation type="submission" date="2007-02" db="EMBL/GenBank/DDBJ databases">
        <authorList>
            <consortium name="NIH - Mammalian Gene Collection (MGC) project"/>
        </authorList>
    </citation>
    <scope>NUCLEOTIDE SEQUENCE [LARGE SCALE MRNA]</scope>
    <source>
        <strain>Hereford</strain>
        <tissue>Basal ganglia</tissue>
    </source>
</reference>
<keyword id="KW-0238">DNA-binding</keyword>
<keyword id="KW-1017">Isopeptide bond</keyword>
<keyword id="KW-0479">Metal-binding</keyword>
<keyword id="KW-0539">Nucleus</keyword>
<keyword id="KW-1185">Reference proteome</keyword>
<keyword id="KW-0677">Repeat</keyword>
<keyword id="KW-0804">Transcription</keyword>
<keyword id="KW-0805">Transcription regulation</keyword>
<keyword id="KW-0832">Ubl conjugation</keyword>
<keyword id="KW-0862">Zinc</keyword>
<keyword id="KW-0863">Zinc-finger</keyword>
<protein>
    <recommendedName>
        <fullName>Zinc finger protein 567</fullName>
    </recommendedName>
</protein>
<dbReference type="EMBL" id="BC133337">
    <property type="protein sequence ID" value="AAI33338.1"/>
    <property type="molecule type" value="mRNA"/>
</dbReference>
<dbReference type="RefSeq" id="NP_001075068.1">
    <property type="nucleotide sequence ID" value="NM_001081599.1"/>
</dbReference>
<dbReference type="SMR" id="A2VDP4"/>
<dbReference type="STRING" id="9913.ENSBTAP00000018075"/>
<dbReference type="PaxDb" id="9913-ENSBTAP00000018075"/>
<dbReference type="GeneID" id="532421"/>
<dbReference type="KEGG" id="bta:532421"/>
<dbReference type="CTD" id="163081"/>
<dbReference type="eggNOG" id="KOG1721">
    <property type="taxonomic scope" value="Eukaryota"/>
</dbReference>
<dbReference type="InParanoid" id="A2VDP4"/>
<dbReference type="OrthoDB" id="9411774at2759"/>
<dbReference type="Proteomes" id="UP000009136">
    <property type="component" value="Unplaced"/>
</dbReference>
<dbReference type="GO" id="GO:0005634">
    <property type="term" value="C:nucleus"/>
    <property type="evidence" value="ECO:0007669"/>
    <property type="project" value="UniProtKB-SubCell"/>
</dbReference>
<dbReference type="GO" id="GO:0003700">
    <property type="term" value="F:DNA-binding transcription factor activity"/>
    <property type="evidence" value="ECO:0000318"/>
    <property type="project" value="GO_Central"/>
</dbReference>
<dbReference type="GO" id="GO:0000978">
    <property type="term" value="F:RNA polymerase II cis-regulatory region sequence-specific DNA binding"/>
    <property type="evidence" value="ECO:0000318"/>
    <property type="project" value="GO_Central"/>
</dbReference>
<dbReference type="GO" id="GO:0008270">
    <property type="term" value="F:zinc ion binding"/>
    <property type="evidence" value="ECO:0007669"/>
    <property type="project" value="UniProtKB-KW"/>
</dbReference>
<dbReference type="GO" id="GO:0006357">
    <property type="term" value="P:regulation of transcription by RNA polymerase II"/>
    <property type="evidence" value="ECO:0000318"/>
    <property type="project" value="GO_Central"/>
</dbReference>
<dbReference type="CDD" id="cd07765">
    <property type="entry name" value="KRAB_A-box"/>
    <property type="match status" value="1"/>
</dbReference>
<dbReference type="FunFam" id="3.30.160.60:FF:003095">
    <property type="match status" value="1"/>
</dbReference>
<dbReference type="FunFam" id="3.30.160.60:FF:000155">
    <property type="entry name" value="zinc finger protein 133 isoform X1"/>
    <property type="match status" value="3"/>
</dbReference>
<dbReference type="FunFam" id="3.30.160.60:FF:000295">
    <property type="entry name" value="zinc finger protein 19"/>
    <property type="match status" value="2"/>
</dbReference>
<dbReference type="FunFam" id="3.30.160.60:FF:000380">
    <property type="entry name" value="zinc finger protein 2 isoform X2"/>
    <property type="match status" value="1"/>
</dbReference>
<dbReference type="FunFam" id="3.30.160.60:FF:002343">
    <property type="entry name" value="Zinc finger protein 33A"/>
    <property type="match status" value="5"/>
</dbReference>
<dbReference type="FunFam" id="3.30.160.60:FF:001270">
    <property type="entry name" value="zinc finger protein 583 isoform X1"/>
    <property type="match status" value="1"/>
</dbReference>
<dbReference type="FunFam" id="3.30.160.60:FF:000330">
    <property type="entry name" value="Zinc finger with KRAB and SCAN domains 1"/>
    <property type="match status" value="1"/>
</dbReference>
<dbReference type="Gene3D" id="6.10.140.140">
    <property type="match status" value="1"/>
</dbReference>
<dbReference type="Gene3D" id="3.30.160.60">
    <property type="entry name" value="Classic Zinc Finger"/>
    <property type="match status" value="14"/>
</dbReference>
<dbReference type="InterPro" id="IPR001909">
    <property type="entry name" value="KRAB"/>
</dbReference>
<dbReference type="InterPro" id="IPR036051">
    <property type="entry name" value="KRAB_dom_sf"/>
</dbReference>
<dbReference type="InterPro" id="IPR036236">
    <property type="entry name" value="Znf_C2H2_sf"/>
</dbReference>
<dbReference type="InterPro" id="IPR013087">
    <property type="entry name" value="Znf_C2H2_type"/>
</dbReference>
<dbReference type="PANTHER" id="PTHR23226:SF346">
    <property type="entry name" value="RB-ASSOCIATED KRAB ZINC FINGER PROTEIN"/>
    <property type="match status" value="1"/>
</dbReference>
<dbReference type="PANTHER" id="PTHR23226">
    <property type="entry name" value="ZINC FINGER AND SCAN DOMAIN-CONTAINING"/>
    <property type="match status" value="1"/>
</dbReference>
<dbReference type="Pfam" id="PF01352">
    <property type="entry name" value="KRAB"/>
    <property type="match status" value="1"/>
</dbReference>
<dbReference type="Pfam" id="PF00096">
    <property type="entry name" value="zf-C2H2"/>
    <property type="match status" value="14"/>
</dbReference>
<dbReference type="SMART" id="SM00349">
    <property type="entry name" value="KRAB"/>
    <property type="match status" value="1"/>
</dbReference>
<dbReference type="SMART" id="SM00355">
    <property type="entry name" value="ZnF_C2H2"/>
    <property type="match status" value="14"/>
</dbReference>
<dbReference type="SUPFAM" id="SSF57667">
    <property type="entry name" value="beta-beta-alpha zinc fingers"/>
    <property type="match status" value="8"/>
</dbReference>
<dbReference type="SUPFAM" id="SSF109640">
    <property type="entry name" value="KRAB domain (Kruppel-associated box)"/>
    <property type="match status" value="1"/>
</dbReference>
<dbReference type="PROSITE" id="PS50805">
    <property type="entry name" value="KRAB"/>
    <property type="match status" value="1"/>
</dbReference>
<dbReference type="PROSITE" id="PS00028">
    <property type="entry name" value="ZINC_FINGER_C2H2_1"/>
    <property type="match status" value="14"/>
</dbReference>
<dbReference type="PROSITE" id="PS50157">
    <property type="entry name" value="ZINC_FINGER_C2H2_2"/>
    <property type="match status" value="14"/>
</dbReference>
<accession>A2VDP4</accession>
<gene>
    <name type="primary">ZNF567</name>
</gene>
<comment type="function">
    <text>May be involved in transcriptional regulation.</text>
</comment>
<comment type="subcellular location">
    <subcellularLocation>
        <location evidence="4">Nucleus</location>
    </subcellularLocation>
</comment>
<comment type="similarity">
    <text evidence="4">Belongs to the krueppel C2H2-type zinc-finger protein family.</text>
</comment>
<proteinExistence type="evidence at transcript level"/>
<sequence>MAQGSVSFKDVTVDFSQEEWQHLDPAQKTLYMDVMLENYCHLISVGCHMTKPDVILKLERGEEPWTSFKGHTCLEENWKAEDFLLKFKEQQDKYSRSVILINHKKLVNENGSTCEKTLTLSKNPINSKKLPPEYDTREKILKNVSELIISNLSPTRRRLSECNGYGKSLLNTKPETAHSGVKSHNQCGRTISHNEKITQYHKMETPAQSFEYNDCEKAFLKRGGPVTHSRTYRRGNTSDYNKRRRTTNIEKKHTCTECGKSFCRKSVLILHQGIHTEEKPYQCHQCGNSFRRKSYLIDHQRTHTGEKPFVCNECGKSFRLKTALTDHQRTHTGEKSYECPQCRNAFRLKSHLIRHQRTHTGEKPYECSDCGKSFRQKTTLSLHQRIHTGEKPYICKECGKSFHQKANLTVHQRTHTGEKPYICNECGKSFSQKTTLALHEKTHNEEKPYICNECGKSFPQKTTLVAHQRTHTGEKSYECPHCGKAFRMKSYLIDHHRTHTGEKPYECNECGKSFSQKTNLNLHQRIHTGEKPYICNECGKSFRQKATLTVHQKIHTGQKSYECPQCGKAFSRKSYLIHHQRTHTGEKPYKCSECGKCFRQKTNLIVHQRTHTGEKPYICNECGKSFSYKRNLIVHQRTHKGENMEMQ</sequence>